<comment type="function">
    <text evidence="1">Catalyzes the stereoinversion of LL-2,6-diaminopimelate (L,L-DAP) to meso-diaminopimelate (meso-DAP), a precursor of L-lysine and an essential component of the bacterial peptidoglycan.</text>
</comment>
<comment type="catalytic activity">
    <reaction evidence="1">
        <text>(2S,6S)-2,6-diaminopimelate = meso-2,6-diaminopimelate</text>
        <dbReference type="Rhea" id="RHEA:15393"/>
        <dbReference type="ChEBI" id="CHEBI:57609"/>
        <dbReference type="ChEBI" id="CHEBI:57791"/>
        <dbReference type="EC" id="5.1.1.7"/>
    </reaction>
</comment>
<comment type="pathway">
    <text evidence="1">Amino-acid biosynthesis; L-lysine biosynthesis via DAP pathway; DL-2,6-diaminopimelate from LL-2,6-diaminopimelate: step 1/1.</text>
</comment>
<comment type="subunit">
    <text evidence="1">Homodimer.</text>
</comment>
<comment type="subcellular location">
    <subcellularLocation>
        <location evidence="1">Cytoplasm</location>
    </subcellularLocation>
</comment>
<comment type="similarity">
    <text evidence="1">Belongs to the diaminopimelate epimerase family.</text>
</comment>
<feature type="chain" id="PRO_1000011949" description="Diaminopimelate epimerase">
    <location>
        <begin position="1"/>
        <end position="288"/>
    </location>
</feature>
<feature type="active site" description="Proton donor" evidence="1">
    <location>
        <position position="76"/>
    </location>
</feature>
<feature type="active site" description="Proton acceptor" evidence="1">
    <location>
        <position position="223"/>
    </location>
</feature>
<feature type="binding site" evidence="1">
    <location>
        <position position="17"/>
    </location>
    <ligand>
        <name>substrate</name>
    </ligand>
</feature>
<feature type="binding site" evidence="1">
    <location>
        <position position="47"/>
    </location>
    <ligand>
        <name>substrate</name>
    </ligand>
</feature>
<feature type="binding site" evidence="1">
    <location>
        <position position="67"/>
    </location>
    <ligand>
        <name>substrate</name>
    </ligand>
</feature>
<feature type="binding site" evidence="1">
    <location>
        <begin position="77"/>
        <end position="78"/>
    </location>
    <ligand>
        <name>substrate</name>
    </ligand>
</feature>
<feature type="binding site" evidence="1">
    <location>
        <position position="163"/>
    </location>
    <ligand>
        <name>substrate</name>
    </ligand>
</feature>
<feature type="binding site" evidence="1">
    <location>
        <position position="196"/>
    </location>
    <ligand>
        <name>substrate</name>
    </ligand>
</feature>
<feature type="binding site" evidence="1">
    <location>
        <begin position="214"/>
        <end position="215"/>
    </location>
    <ligand>
        <name>substrate</name>
    </ligand>
</feature>
<feature type="binding site" evidence="1">
    <location>
        <begin position="224"/>
        <end position="225"/>
    </location>
    <ligand>
        <name>substrate</name>
    </ligand>
</feature>
<feature type="site" description="Could be important to modulate the pK values of the two catalytic cysteine residues" evidence="1">
    <location>
        <position position="165"/>
    </location>
</feature>
<feature type="site" description="Could be important to modulate the pK values of the two catalytic cysteine residues" evidence="1">
    <location>
        <position position="214"/>
    </location>
</feature>
<reference key="1">
    <citation type="submission" date="2006-03" db="EMBL/GenBank/DDBJ databases">
        <title>Complete sequence of Rhodopseudomonas palustris BisB18.</title>
        <authorList>
            <consortium name="US DOE Joint Genome Institute"/>
            <person name="Copeland A."/>
            <person name="Lucas S."/>
            <person name="Lapidus A."/>
            <person name="Barry K."/>
            <person name="Detter J.C."/>
            <person name="Glavina del Rio T."/>
            <person name="Hammon N."/>
            <person name="Israni S."/>
            <person name="Dalin E."/>
            <person name="Tice H."/>
            <person name="Pitluck S."/>
            <person name="Chain P."/>
            <person name="Malfatti S."/>
            <person name="Shin M."/>
            <person name="Vergez L."/>
            <person name="Schmutz J."/>
            <person name="Larimer F."/>
            <person name="Land M."/>
            <person name="Hauser L."/>
            <person name="Pelletier D.A."/>
            <person name="Kyrpides N."/>
            <person name="Anderson I."/>
            <person name="Oda Y."/>
            <person name="Harwood C.S."/>
            <person name="Richardson P."/>
        </authorList>
    </citation>
    <scope>NUCLEOTIDE SEQUENCE [LARGE SCALE GENOMIC DNA]</scope>
    <source>
        <strain>BisB18</strain>
    </source>
</reference>
<protein>
    <recommendedName>
        <fullName evidence="1">Diaminopimelate epimerase</fullName>
        <shortName evidence="1">DAP epimerase</shortName>
        <ecNumber evidence="1">5.1.1.7</ecNumber>
    </recommendedName>
    <alternativeName>
        <fullName evidence="1">PLP-independent amino acid racemase</fullName>
    </alternativeName>
</protein>
<keyword id="KW-0028">Amino-acid biosynthesis</keyword>
<keyword id="KW-0963">Cytoplasm</keyword>
<keyword id="KW-0413">Isomerase</keyword>
<keyword id="KW-0457">Lysine biosynthesis</keyword>
<accession>Q21CU6</accession>
<gene>
    <name evidence="1" type="primary">dapF</name>
    <name type="ordered locus">RPC_0215</name>
</gene>
<dbReference type="EC" id="5.1.1.7" evidence="1"/>
<dbReference type="EMBL" id="CP000301">
    <property type="protein sequence ID" value="ABD85790.1"/>
    <property type="molecule type" value="Genomic_DNA"/>
</dbReference>
<dbReference type="SMR" id="Q21CU6"/>
<dbReference type="STRING" id="316056.RPC_0215"/>
<dbReference type="KEGG" id="rpc:RPC_0215"/>
<dbReference type="eggNOG" id="COG0253">
    <property type="taxonomic scope" value="Bacteria"/>
</dbReference>
<dbReference type="HOGENOM" id="CLU_053306_1_0_5"/>
<dbReference type="OrthoDB" id="9805408at2"/>
<dbReference type="UniPathway" id="UPA00034">
    <property type="reaction ID" value="UER00025"/>
</dbReference>
<dbReference type="GO" id="GO:0005829">
    <property type="term" value="C:cytosol"/>
    <property type="evidence" value="ECO:0007669"/>
    <property type="project" value="TreeGrafter"/>
</dbReference>
<dbReference type="GO" id="GO:0008837">
    <property type="term" value="F:diaminopimelate epimerase activity"/>
    <property type="evidence" value="ECO:0007669"/>
    <property type="project" value="UniProtKB-UniRule"/>
</dbReference>
<dbReference type="GO" id="GO:0009089">
    <property type="term" value="P:lysine biosynthetic process via diaminopimelate"/>
    <property type="evidence" value="ECO:0007669"/>
    <property type="project" value="UniProtKB-UniRule"/>
</dbReference>
<dbReference type="FunFam" id="3.10.310.10:FF:000004">
    <property type="entry name" value="Diaminopimelate epimerase"/>
    <property type="match status" value="1"/>
</dbReference>
<dbReference type="Gene3D" id="3.10.310.10">
    <property type="entry name" value="Diaminopimelate Epimerase, Chain A, domain 1"/>
    <property type="match status" value="2"/>
</dbReference>
<dbReference type="HAMAP" id="MF_00197">
    <property type="entry name" value="DAP_epimerase"/>
    <property type="match status" value="1"/>
</dbReference>
<dbReference type="InterPro" id="IPR018510">
    <property type="entry name" value="DAP_epimerase_AS"/>
</dbReference>
<dbReference type="InterPro" id="IPR001653">
    <property type="entry name" value="DAP_epimerase_DapF"/>
</dbReference>
<dbReference type="NCBIfam" id="TIGR00652">
    <property type="entry name" value="DapF"/>
    <property type="match status" value="1"/>
</dbReference>
<dbReference type="PANTHER" id="PTHR31689:SF0">
    <property type="entry name" value="DIAMINOPIMELATE EPIMERASE"/>
    <property type="match status" value="1"/>
</dbReference>
<dbReference type="PANTHER" id="PTHR31689">
    <property type="entry name" value="DIAMINOPIMELATE EPIMERASE, CHLOROPLASTIC"/>
    <property type="match status" value="1"/>
</dbReference>
<dbReference type="Pfam" id="PF01678">
    <property type="entry name" value="DAP_epimerase"/>
    <property type="match status" value="2"/>
</dbReference>
<dbReference type="SUPFAM" id="SSF54506">
    <property type="entry name" value="Diaminopimelate epimerase-like"/>
    <property type="match status" value="2"/>
</dbReference>
<dbReference type="PROSITE" id="PS01326">
    <property type="entry name" value="DAP_EPIMERASE"/>
    <property type="match status" value="1"/>
</dbReference>
<evidence type="ECO:0000255" key="1">
    <source>
        <dbReference type="HAMAP-Rule" id="MF_00197"/>
    </source>
</evidence>
<organism>
    <name type="scientific">Rhodopseudomonas palustris (strain BisB18)</name>
    <dbReference type="NCBI Taxonomy" id="316056"/>
    <lineage>
        <taxon>Bacteria</taxon>
        <taxon>Pseudomonadati</taxon>
        <taxon>Pseudomonadota</taxon>
        <taxon>Alphaproteobacteria</taxon>
        <taxon>Hyphomicrobiales</taxon>
        <taxon>Nitrobacteraceae</taxon>
        <taxon>Rhodopseudomonas</taxon>
    </lineage>
</organism>
<proteinExistence type="inferred from homology"/>
<sequence>MNELANRSFSKMNGIGNEIVVLDLRDHPVAVSAADARAIASEVPYDQLMVLQPPRTPGTEAFVRIYNNDGSESSACGNGMRCVARQVFATSASDALTFETRAGLLNCWRPAPNLYTVDMGPPKLGWKDIPLAEEFRDTRSIELQIGPIDAPVLHTPSVVSMGNPHAIFWVDDVNAHDLARFGPLLENHPIFPERANITLAQIVDRDHIVIRTWERGVGLTKACGSAACATAVAAARLRRVNRVVHITLPGGELGIEWRASDDHVLMTGPAAFEFEGRFDPAVFAAAAS</sequence>
<name>DAPF_RHOPB</name>